<protein>
    <recommendedName>
        <fullName evidence="4">Diacylglycerol O-acyltransferase 2</fullName>
        <ecNumber evidence="1">2.3.1.20</ecNumber>
    </recommendedName>
    <alternativeName>
        <fullName evidence="1">Acyl-CoA retinol O-fatty-acyltransferase</fullName>
        <shortName evidence="1">ARAT</shortName>
        <shortName evidence="1">Retinol O-fatty-acyltransferase</shortName>
        <ecNumber evidence="1">2.3.1.76</ecNumber>
    </alternativeName>
    <alternativeName>
        <fullName>Diglyceride acyltransferase 2</fullName>
    </alternativeName>
</protein>
<dbReference type="EC" id="2.3.1.20" evidence="1"/>
<dbReference type="EC" id="2.3.1.76" evidence="1"/>
<dbReference type="EMBL" id="BC096927">
    <property type="protein sequence ID" value="AAH96927.1"/>
    <property type="molecule type" value="mRNA"/>
</dbReference>
<dbReference type="RefSeq" id="NP_001025367.1">
    <property type="nucleotide sequence ID" value="NM_001030196.1"/>
</dbReference>
<dbReference type="FunCoup" id="Q4V9F0">
    <property type="interactions" value="1477"/>
</dbReference>
<dbReference type="STRING" id="7955.ENSDARP00000116381"/>
<dbReference type="PaxDb" id="7955-ENSDARP00000116381"/>
<dbReference type="Ensembl" id="ENSDART00000066793">
    <property type="protein sequence ID" value="ENSDARP00000066792"/>
    <property type="gene ID" value="ENSDARG00000018846"/>
</dbReference>
<dbReference type="GeneID" id="565316"/>
<dbReference type="KEGG" id="dre:565316"/>
<dbReference type="AGR" id="ZFIN:ZDB-GENE-050913-15"/>
<dbReference type="CTD" id="84649"/>
<dbReference type="ZFIN" id="ZDB-GENE-050913-15">
    <property type="gene designation" value="dgat2"/>
</dbReference>
<dbReference type="eggNOG" id="KOG0831">
    <property type="taxonomic scope" value="Eukaryota"/>
</dbReference>
<dbReference type="HOGENOM" id="CLU_023995_0_1_1"/>
<dbReference type="InParanoid" id="Q4V9F0"/>
<dbReference type="OrthoDB" id="264532at2759"/>
<dbReference type="PhylomeDB" id="Q4V9F0"/>
<dbReference type="Reactome" id="R-DRE-1482883">
    <property type="pathway name" value="Acyl chain remodeling of DAG and TAG"/>
</dbReference>
<dbReference type="Reactome" id="R-DRE-2142753">
    <property type="pathway name" value="Arachidonate metabolism"/>
</dbReference>
<dbReference type="Reactome" id="R-DRE-2187335">
    <property type="pathway name" value="The retinoid cycle in cones (daylight vision)"/>
</dbReference>
<dbReference type="Reactome" id="R-DRE-75109">
    <property type="pathway name" value="Triglyceride biosynthesis"/>
</dbReference>
<dbReference type="Reactome" id="R-DRE-9640463">
    <property type="pathway name" value="Wax biosynthesis"/>
</dbReference>
<dbReference type="UniPathway" id="UPA00282"/>
<dbReference type="PRO" id="PR:Q4V9F0"/>
<dbReference type="Proteomes" id="UP000000437">
    <property type="component" value="Chromosome 10"/>
</dbReference>
<dbReference type="Bgee" id="ENSDARG00000018846">
    <property type="expression patterns" value="Expressed in liver and 14 other cell types or tissues"/>
</dbReference>
<dbReference type="ExpressionAtlas" id="Q4V9F0">
    <property type="expression patterns" value="baseline and differential"/>
</dbReference>
<dbReference type="GO" id="GO:0005789">
    <property type="term" value="C:endoplasmic reticulum membrane"/>
    <property type="evidence" value="ECO:0000250"/>
    <property type="project" value="UniProtKB"/>
</dbReference>
<dbReference type="GO" id="GO:0005811">
    <property type="term" value="C:lipid droplet"/>
    <property type="evidence" value="ECO:0000250"/>
    <property type="project" value="UniProtKB"/>
</dbReference>
<dbReference type="GO" id="GO:1990578">
    <property type="term" value="C:perinuclear endoplasmic reticulum membrane"/>
    <property type="evidence" value="ECO:0000250"/>
    <property type="project" value="UniProtKB"/>
</dbReference>
<dbReference type="GO" id="GO:0004144">
    <property type="term" value="F:diacylglycerol O-acyltransferase activity"/>
    <property type="evidence" value="ECO:0000250"/>
    <property type="project" value="UniProtKB"/>
</dbReference>
<dbReference type="GO" id="GO:0050252">
    <property type="term" value="F:retinol O-fatty-acyltransferase activity"/>
    <property type="evidence" value="ECO:0007669"/>
    <property type="project" value="UniProtKB-EC"/>
</dbReference>
<dbReference type="GO" id="GO:0006651">
    <property type="term" value="P:diacylglycerol biosynthetic process"/>
    <property type="evidence" value="ECO:0000250"/>
    <property type="project" value="UniProtKB"/>
</dbReference>
<dbReference type="GO" id="GO:0006071">
    <property type="term" value="P:glycerol metabolic process"/>
    <property type="evidence" value="ECO:0007669"/>
    <property type="project" value="UniProtKB-KW"/>
</dbReference>
<dbReference type="GO" id="GO:0055088">
    <property type="term" value="P:lipid homeostasis"/>
    <property type="evidence" value="ECO:0000316"/>
    <property type="project" value="ZFIN"/>
</dbReference>
<dbReference type="GO" id="GO:1905897">
    <property type="term" value="P:regulation of response to endoplasmic reticulum stress"/>
    <property type="evidence" value="ECO:0000316"/>
    <property type="project" value="ZFIN"/>
</dbReference>
<dbReference type="GO" id="GO:0061959">
    <property type="term" value="P:response to (R)-carnitine"/>
    <property type="evidence" value="ECO:0000270"/>
    <property type="project" value="ZFIN"/>
</dbReference>
<dbReference type="GO" id="GO:0019432">
    <property type="term" value="P:triglyceride biosynthetic process"/>
    <property type="evidence" value="ECO:0000250"/>
    <property type="project" value="UniProtKB"/>
</dbReference>
<dbReference type="CDD" id="cd07987">
    <property type="entry name" value="LPLAT_MGAT-like"/>
    <property type="match status" value="1"/>
</dbReference>
<dbReference type="InterPro" id="IPR007130">
    <property type="entry name" value="DAGAT"/>
</dbReference>
<dbReference type="PANTHER" id="PTHR12317">
    <property type="entry name" value="DIACYLGLYCEROL O-ACYLTRANSFERASE"/>
    <property type="match status" value="1"/>
</dbReference>
<dbReference type="PANTHER" id="PTHR12317:SF14">
    <property type="entry name" value="DIACYLGLYCEROL O-ACYLTRANSFERASE 2"/>
    <property type="match status" value="1"/>
</dbReference>
<dbReference type="Pfam" id="PF03982">
    <property type="entry name" value="DAGAT"/>
    <property type="match status" value="1"/>
</dbReference>
<sequence length="361" mass="40865">MKTILAAYSGVKKGSGSSILSALHDLPTVPWLTRSKMVKHLQVISVLQFIMTFLTMGIACSLLLMYMFCTDFWVISVLYVAWLIYDWNTPGQGGRRSTWVRDWTVWKYMRDYFPIRLIKTHNLLPSRNYIFGYHPHGILCFGAFCNFGTEATGFTKVFPGIKPSLATLAGNFRLPMFREYLMCGGICPVNRNSIDYLLSSNGTGNAVVIVIGGAAESLDCAPGRNSVMLKKRKGFVKLALKQGADLVPVYSFGENEVYKQLIFEEGSWWRTIQRKLQKFLGFAPCLFHGCGLFFPESWGLVPYCKPITTVVGEPITVPKIEEPTQDVIDMYHAMYIRSLKSLFDNYKTRFGLNESDTLIIH</sequence>
<gene>
    <name type="primary">dgat2</name>
    <name type="ORF">zgc:113394</name>
</gene>
<comment type="function">
    <text evidence="1">Essential acyltransferase that catalyzes the terminal and only committed step in triacylglycerol synthesis by using diacylglycerol and fatty acyl CoA as substrates. Required for synthesis and storage of intracellular triglycerides. Probably plays a central role in cytosolic lipid accumulation (By similarity).</text>
</comment>
<comment type="catalytic activity">
    <reaction evidence="1">
        <text>an acyl-CoA + a 1,2-diacyl-sn-glycerol = a triacyl-sn-glycerol + CoA</text>
        <dbReference type="Rhea" id="RHEA:10868"/>
        <dbReference type="ChEBI" id="CHEBI:17815"/>
        <dbReference type="ChEBI" id="CHEBI:57287"/>
        <dbReference type="ChEBI" id="CHEBI:58342"/>
        <dbReference type="ChEBI" id="CHEBI:64615"/>
        <dbReference type="EC" id="2.3.1.20"/>
    </reaction>
    <physiologicalReaction direction="left-to-right" evidence="1">
        <dbReference type="Rhea" id="RHEA:10869"/>
    </physiologicalReaction>
</comment>
<comment type="catalytic activity">
    <reaction evidence="1">
        <text>all-trans-retinol + an acyl-CoA = an all-trans-retinyl ester + CoA</text>
        <dbReference type="Rhea" id="RHEA:11488"/>
        <dbReference type="ChEBI" id="CHEBI:17336"/>
        <dbReference type="ChEBI" id="CHEBI:57287"/>
        <dbReference type="ChEBI" id="CHEBI:58342"/>
        <dbReference type="ChEBI" id="CHEBI:63410"/>
        <dbReference type="EC" id="2.3.1.76"/>
    </reaction>
    <physiologicalReaction direction="left-to-right" evidence="1">
        <dbReference type="Rhea" id="RHEA:11489"/>
    </physiologicalReaction>
</comment>
<comment type="catalytic activity">
    <reaction evidence="1">
        <text>2-(9Z-octadecenoyl)-glycerol + (9Z)-octadecenoyl-CoA = 1,2-di-(9Z-octadecenoyl)-sn-glycerol + CoA</text>
        <dbReference type="Rhea" id="RHEA:37911"/>
        <dbReference type="ChEBI" id="CHEBI:52333"/>
        <dbReference type="ChEBI" id="CHEBI:57287"/>
        <dbReference type="ChEBI" id="CHEBI:57387"/>
        <dbReference type="ChEBI" id="CHEBI:73990"/>
    </reaction>
    <physiologicalReaction direction="left-to-right" evidence="1">
        <dbReference type="Rhea" id="RHEA:37912"/>
    </physiologicalReaction>
</comment>
<comment type="catalytic activity">
    <reaction evidence="1">
        <text>1,2-di-(9Z-octadecenoyl)-sn-glycerol + (9Z)-octadecenoyl-CoA = 1,2,3-tri-(9Z-octadecenoyl)-glycerol + CoA</text>
        <dbReference type="Rhea" id="RHEA:38219"/>
        <dbReference type="ChEBI" id="CHEBI:52333"/>
        <dbReference type="ChEBI" id="CHEBI:53753"/>
        <dbReference type="ChEBI" id="CHEBI:57287"/>
        <dbReference type="ChEBI" id="CHEBI:57387"/>
    </reaction>
    <physiologicalReaction direction="left-to-right" evidence="1">
        <dbReference type="Rhea" id="RHEA:38220"/>
    </physiologicalReaction>
</comment>
<comment type="catalytic activity">
    <reaction evidence="1">
        <text>all-trans-retinol + hexadecanoyl-CoA = all-trans-retinyl hexadecanoate + CoA</text>
        <dbReference type="Rhea" id="RHEA:38175"/>
        <dbReference type="ChEBI" id="CHEBI:17336"/>
        <dbReference type="ChEBI" id="CHEBI:17616"/>
        <dbReference type="ChEBI" id="CHEBI:57287"/>
        <dbReference type="ChEBI" id="CHEBI:57379"/>
    </reaction>
    <physiologicalReaction direction="left-to-right" evidence="1">
        <dbReference type="Rhea" id="RHEA:38176"/>
    </physiologicalReaction>
</comment>
<comment type="catalytic activity">
    <reaction evidence="1">
        <text>1-O-(9Z-octadecenyl)-glycerol + (9Z)-octadecenoyl-CoA = 1-O-(9Z-octadecyl)-3-(9Z-octadecenoyl)-glycerol + CoA</text>
        <dbReference type="Rhea" id="RHEA:55340"/>
        <dbReference type="ChEBI" id="CHEBI:34116"/>
        <dbReference type="ChEBI" id="CHEBI:57287"/>
        <dbReference type="ChEBI" id="CHEBI:57387"/>
        <dbReference type="ChEBI" id="CHEBI:197429"/>
    </reaction>
    <physiologicalReaction direction="left-to-right" evidence="1">
        <dbReference type="Rhea" id="RHEA:55341"/>
    </physiologicalReaction>
</comment>
<comment type="catalytic activity">
    <reaction evidence="1">
        <text>1-(9Z-octadecenoyl)-glycerol + (9Z)-octadecenoyl-CoA = 1,2-di-(9Z-octadecenoyl)-glycerol + CoA</text>
        <dbReference type="Rhea" id="RHEA:37915"/>
        <dbReference type="ChEBI" id="CHEBI:52323"/>
        <dbReference type="ChEBI" id="CHEBI:57287"/>
        <dbReference type="ChEBI" id="CHEBI:57387"/>
        <dbReference type="ChEBI" id="CHEBI:75342"/>
    </reaction>
    <physiologicalReaction direction="left-to-right" evidence="1">
        <dbReference type="Rhea" id="RHEA:37916"/>
    </physiologicalReaction>
</comment>
<comment type="catalytic activity">
    <reaction evidence="2">
        <text>1,2-di-(9Z-octadecenoyl)-sn-glycerol + hexadecanoyl-CoA = 1,2-di-(9Z)-octadecenoyl-3-hexadecanoyl-sn-glycerol + CoA</text>
        <dbReference type="Rhea" id="RHEA:38163"/>
        <dbReference type="ChEBI" id="CHEBI:52333"/>
        <dbReference type="ChEBI" id="CHEBI:57287"/>
        <dbReference type="ChEBI" id="CHEBI:57379"/>
        <dbReference type="ChEBI" id="CHEBI:75583"/>
    </reaction>
    <physiologicalReaction direction="left-to-right" evidence="2">
        <dbReference type="Rhea" id="RHEA:38164"/>
    </physiologicalReaction>
</comment>
<comment type="catalytic activity">
    <reaction evidence="2">
        <text>1,3-di-(9Z-octadecenoyl)-glycerol + (9Z)-octadecenoyl-CoA = 1,2,3-tri-(9Z-octadecenoyl)-glycerol + CoA</text>
        <dbReference type="Rhea" id="RHEA:38435"/>
        <dbReference type="ChEBI" id="CHEBI:53753"/>
        <dbReference type="ChEBI" id="CHEBI:57287"/>
        <dbReference type="ChEBI" id="CHEBI:57387"/>
        <dbReference type="ChEBI" id="CHEBI:75735"/>
    </reaction>
    <physiologicalReaction direction="left-to-right" evidence="2">
        <dbReference type="Rhea" id="RHEA:38436"/>
    </physiologicalReaction>
</comment>
<comment type="catalytic activity">
    <reaction evidence="2">
        <text>2,3-di-(9Z)-octadecenoyl-sn-glycerol + (9Z)-octadecenoyl-CoA = 1,2,3-tri-(9Z-octadecenoyl)-glycerol + CoA</text>
        <dbReference type="Rhea" id="RHEA:38439"/>
        <dbReference type="ChEBI" id="CHEBI:53753"/>
        <dbReference type="ChEBI" id="CHEBI:57287"/>
        <dbReference type="ChEBI" id="CHEBI:57387"/>
        <dbReference type="ChEBI" id="CHEBI:75824"/>
    </reaction>
    <physiologicalReaction direction="left-to-right" evidence="2">
        <dbReference type="Rhea" id="RHEA:38440"/>
    </physiologicalReaction>
</comment>
<comment type="catalytic activity">
    <reaction evidence="2">
        <text>2-(9Z-octadecenoyl)-glycerol + hexadecanoyl-CoA = 1-hexadecanoyl-2-(9Z-octadecenoyl)-sn-glycerol + CoA</text>
        <dbReference type="Rhea" id="RHEA:38071"/>
        <dbReference type="ChEBI" id="CHEBI:57287"/>
        <dbReference type="ChEBI" id="CHEBI:57379"/>
        <dbReference type="ChEBI" id="CHEBI:73990"/>
        <dbReference type="ChEBI" id="CHEBI:75466"/>
    </reaction>
    <physiologicalReaction direction="left-to-right" evidence="2">
        <dbReference type="Rhea" id="RHEA:38072"/>
    </physiologicalReaction>
</comment>
<comment type="pathway">
    <text>Glycerolipid metabolism; triacylglycerol biosynthesis.</text>
</comment>
<comment type="subcellular location">
    <subcellularLocation>
        <location evidence="1">Endoplasmic reticulum membrane</location>
        <topology evidence="1">Multi-pass membrane protein</topology>
    </subcellularLocation>
    <subcellularLocation>
        <location evidence="1">Lipid droplet</location>
    </subcellularLocation>
    <subcellularLocation>
        <location evidence="1">Cytoplasm</location>
        <location evidence="1">Perinuclear region</location>
    </subcellularLocation>
</comment>
<comment type="similarity">
    <text evidence="4">Belongs to the diacylglycerol acyltransferase family.</text>
</comment>
<accession>Q4V9F0</accession>
<name>DGAT2_DANRE</name>
<feature type="chain" id="PRO_0000249048" description="Diacylglycerol O-acyltransferase 2">
    <location>
        <begin position="1"/>
        <end position="361"/>
    </location>
</feature>
<feature type="topological domain" description="Cytoplasmic" evidence="3">
    <location>
        <begin position="1"/>
        <end position="42"/>
    </location>
</feature>
<feature type="transmembrane region" description="Helical" evidence="3">
    <location>
        <begin position="43"/>
        <end position="61"/>
    </location>
</feature>
<feature type="topological domain" description="Lumenal" evidence="3">
    <location>
        <begin position="62"/>
        <end position="65"/>
    </location>
</feature>
<feature type="transmembrane region" description="Helical" evidence="3">
    <location>
        <begin position="66"/>
        <end position="85"/>
    </location>
</feature>
<feature type="topological domain" description="Cytoplasmic" evidence="3">
    <location>
        <begin position="86"/>
        <end position="361"/>
    </location>
</feature>
<organism>
    <name type="scientific">Danio rerio</name>
    <name type="common">Zebrafish</name>
    <name type="synonym">Brachydanio rerio</name>
    <dbReference type="NCBI Taxonomy" id="7955"/>
    <lineage>
        <taxon>Eukaryota</taxon>
        <taxon>Metazoa</taxon>
        <taxon>Chordata</taxon>
        <taxon>Craniata</taxon>
        <taxon>Vertebrata</taxon>
        <taxon>Euteleostomi</taxon>
        <taxon>Actinopterygii</taxon>
        <taxon>Neopterygii</taxon>
        <taxon>Teleostei</taxon>
        <taxon>Ostariophysi</taxon>
        <taxon>Cypriniformes</taxon>
        <taxon>Danionidae</taxon>
        <taxon>Danioninae</taxon>
        <taxon>Danio</taxon>
    </lineage>
</organism>
<keyword id="KW-0012">Acyltransferase</keyword>
<keyword id="KW-0963">Cytoplasm</keyword>
<keyword id="KW-0256">Endoplasmic reticulum</keyword>
<keyword id="KW-0319">Glycerol metabolism</keyword>
<keyword id="KW-0444">Lipid biosynthesis</keyword>
<keyword id="KW-0551">Lipid droplet</keyword>
<keyword id="KW-0443">Lipid metabolism</keyword>
<keyword id="KW-0472">Membrane</keyword>
<keyword id="KW-1185">Reference proteome</keyword>
<keyword id="KW-0808">Transferase</keyword>
<keyword id="KW-0812">Transmembrane</keyword>
<keyword id="KW-1133">Transmembrane helix</keyword>
<evidence type="ECO:0000250" key="1">
    <source>
        <dbReference type="UniProtKB" id="Q96PD7"/>
    </source>
</evidence>
<evidence type="ECO:0000250" key="2">
    <source>
        <dbReference type="UniProtKB" id="Q9DCV3"/>
    </source>
</evidence>
<evidence type="ECO:0000255" key="3"/>
<evidence type="ECO:0000305" key="4"/>
<proteinExistence type="evidence at transcript level"/>
<reference key="1">
    <citation type="submission" date="2005-06" db="EMBL/GenBank/DDBJ databases">
        <authorList>
            <consortium name="NIH - Zebrafish Gene Collection (ZGC) project"/>
        </authorList>
    </citation>
    <scope>NUCLEOTIDE SEQUENCE [LARGE SCALE MRNA]</scope>
    <source>
        <tissue>Embryo</tissue>
    </source>
</reference>